<gene>
    <name evidence="6" type="primary">TIFY5</name>
    <name evidence="6" type="synonym">JAZ2</name>
    <name evidence="7" type="ORF">OsI_24929</name>
</gene>
<organism>
    <name type="scientific">Oryza sativa subsp. indica</name>
    <name type="common">Rice</name>
    <dbReference type="NCBI Taxonomy" id="39946"/>
    <lineage>
        <taxon>Eukaryota</taxon>
        <taxon>Viridiplantae</taxon>
        <taxon>Streptophyta</taxon>
        <taxon>Embryophyta</taxon>
        <taxon>Tracheophyta</taxon>
        <taxon>Spermatophyta</taxon>
        <taxon>Magnoliopsida</taxon>
        <taxon>Liliopsida</taxon>
        <taxon>Poales</taxon>
        <taxon>Poaceae</taxon>
        <taxon>BOP clade</taxon>
        <taxon>Oryzoideae</taxon>
        <taxon>Oryzeae</taxon>
        <taxon>Oryzinae</taxon>
        <taxon>Oryza</taxon>
        <taxon>Oryza sativa</taxon>
    </lineage>
</organism>
<sequence>MAEERRRDDGGDVEVELSLRLRTGDDSTSADPAPATVAAEARRNLTIFYNGRMCAVNVTELQARTIISMASQGNFGKQQQQQIQGRDDHHYHQGESSSGGGVSTAAARHCDVAGSSSSHSGSGSGSATPPRPALVSPRAGLQAAAAAAPTMNQPPAASGLSMKRSLQRFLEKRKTRAAAPLYARR</sequence>
<evidence type="ECO:0000250" key="1">
    <source>
        <dbReference type="UniProtKB" id="Q7XPM8"/>
    </source>
</evidence>
<evidence type="ECO:0000255" key="2"/>
<evidence type="ECO:0000255" key="3">
    <source>
        <dbReference type="PROSITE-ProRule" id="PRU00650"/>
    </source>
</evidence>
<evidence type="ECO:0000255" key="4">
    <source>
        <dbReference type="PROSITE-ProRule" id="PRU00768"/>
    </source>
</evidence>
<evidence type="ECO:0000256" key="5">
    <source>
        <dbReference type="SAM" id="MobiDB-lite"/>
    </source>
</evidence>
<evidence type="ECO:0000305" key="6"/>
<evidence type="ECO:0000312" key="7">
    <source>
        <dbReference type="EMBL" id="EAZ02803.1"/>
    </source>
</evidence>
<accession>A2YI92</accession>
<reference key="1">
    <citation type="journal article" date="2005" name="PLoS Biol.">
        <title>The genomes of Oryza sativa: a history of duplications.</title>
        <authorList>
            <person name="Yu J."/>
            <person name="Wang J."/>
            <person name="Lin W."/>
            <person name="Li S."/>
            <person name="Li H."/>
            <person name="Zhou J."/>
            <person name="Ni P."/>
            <person name="Dong W."/>
            <person name="Hu S."/>
            <person name="Zeng C."/>
            <person name="Zhang J."/>
            <person name="Zhang Y."/>
            <person name="Li R."/>
            <person name="Xu Z."/>
            <person name="Li S."/>
            <person name="Li X."/>
            <person name="Zheng H."/>
            <person name="Cong L."/>
            <person name="Lin L."/>
            <person name="Yin J."/>
            <person name="Geng J."/>
            <person name="Li G."/>
            <person name="Shi J."/>
            <person name="Liu J."/>
            <person name="Lv H."/>
            <person name="Li J."/>
            <person name="Wang J."/>
            <person name="Deng Y."/>
            <person name="Ran L."/>
            <person name="Shi X."/>
            <person name="Wang X."/>
            <person name="Wu Q."/>
            <person name="Li C."/>
            <person name="Ren X."/>
            <person name="Wang J."/>
            <person name="Wang X."/>
            <person name="Li D."/>
            <person name="Liu D."/>
            <person name="Zhang X."/>
            <person name="Ji Z."/>
            <person name="Zhao W."/>
            <person name="Sun Y."/>
            <person name="Zhang Z."/>
            <person name="Bao J."/>
            <person name="Han Y."/>
            <person name="Dong L."/>
            <person name="Ji J."/>
            <person name="Chen P."/>
            <person name="Wu S."/>
            <person name="Liu J."/>
            <person name="Xiao Y."/>
            <person name="Bu D."/>
            <person name="Tan J."/>
            <person name="Yang L."/>
            <person name="Ye C."/>
            <person name="Zhang J."/>
            <person name="Xu J."/>
            <person name="Zhou Y."/>
            <person name="Yu Y."/>
            <person name="Zhang B."/>
            <person name="Zhuang S."/>
            <person name="Wei H."/>
            <person name="Liu B."/>
            <person name="Lei M."/>
            <person name="Yu H."/>
            <person name="Li Y."/>
            <person name="Xu H."/>
            <person name="Wei S."/>
            <person name="He X."/>
            <person name="Fang L."/>
            <person name="Zhang Z."/>
            <person name="Zhang Y."/>
            <person name="Huang X."/>
            <person name="Su Z."/>
            <person name="Tong W."/>
            <person name="Li J."/>
            <person name="Tong Z."/>
            <person name="Li S."/>
            <person name="Ye J."/>
            <person name="Wang L."/>
            <person name="Fang L."/>
            <person name="Lei T."/>
            <person name="Chen C.-S."/>
            <person name="Chen H.-C."/>
            <person name="Xu Z."/>
            <person name="Li H."/>
            <person name="Huang H."/>
            <person name="Zhang F."/>
            <person name="Xu H."/>
            <person name="Li N."/>
            <person name="Zhao C."/>
            <person name="Li S."/>
            <person name="Dong L."/>
            <person name="Huang Y."/>
            <person name="Li L."/>
            <person name="Xi Y."/>
            <person name="Qi Q."/>
            <person name="Li W."/>
            <person name="Zhang B."/>
            <person name="Hu W."/>
            <person name="Zhang Y."/>
            <person name="Tian X."/>
            <person name="Jiao Y."/>
            <person name="Liang X."/>
            <person name="Jin J."/>
            <person name="Gao L."/>
            <person name="Zheng W."/>
            <person name="Hao B."/>
            <person name="Liu S.-M."/>
            <person name="Wang W."/>
            <person name="Yuan L."/>
            <person name="Cao M."/>
            <person name="McDermott J."/>
            <person name="Samudrala R."/>
            <person name="Wang J."/>
            <person name="Wong G.K.-S."/>
            <person name="Yang H."/>
        </authorList>
    </citation>
    <scope>NUCLEOTIDE SEQUENCE [LARGE SCALE GENOMIC DNA]</scope>
    <source>
        <strain>cv. 93-11</strain>
    </source>
</reference>
<feature type="chain" id="PRO_0000434841" description="Protein TIFY 5">
    <location>
        <begin position="1"/>
        <end position="185"/>
    </location>
</feature>
<feature type="domain" description="Tify" evidence="3">
    <location>
        <begin position="38"/>
        <end position="72"/>
    </location>
</feature>
<feature type="region of interest" description="Disordered" evidence="5">
    <location>
        <begin position="77"/>
        <end position="185"/>
    </location>
</feature>
<feature type="short sequence motif" description="Jas" evidence="2">
    <location>
        <begin position="155"/>
        <end position="182"/>
    </location>
</feature>
<feature type="short sequence motif" description="Nuclear localization signal" evidence="4">
    <location>
        <begin position="162"/>
        <end position="169"/>
    </location>
</feature>
<feature type="compositionally biased region" description="Low complexity" evidence="5">
    <location>
        <begin position="137"/>
        <end position="157"/>
    </location>
</feature>
<name>TIF5_ORYSI</name>
<dbReference type="EMBL" id="CM000132">
    <property type="protein sequence ID" value="EAZ02803.1"/>
    <property type="molecule type" value="Genomic_DNA"/>
</dbReference>
<dbReference type="STRING" id="39946.A2YI92"/>
<dbReference type="EnsemblPlants" id="BGIOSGA024807-TA">
    <property type="protein sequence ID" value="BGIOSGA024807-PA"/>
    <property type="gene ID" value="BGIOSGA024807"/>
</dbReference>
<dbReference type="EnsemblPlants" id="OsGoSa_07g0003280.01">
    <property type="protein sequence ID" value="OsGoSa_07g0003280.01"/>
    <property type="gene ID" value="OsGoSa_07g0003280"/>
</dbReference>
<dbReference type="EnsemblPlants" id="OsLaMu_07g0003240.01">
    <property type="protein sequence ID" value="OsLaMu_07g0003240.01"/>
    <property type="gene ID" value="OsLaMu_07g0003240"/>
</dbReference>
<dbReference type="EnsemblPlants" id="OsLima_07g0003260.01">
    <property type="protein sequence ID" value="OsLima_07g0003260.01"/>
    <property type="gene ID" value="OsLima_07g0003260"/>
</dbReference>
<dbReference type="EnsemblPlants" id="OsLiXu_07g0003350.01">
    <property type="protein sequence ID" value="OsLiXu_07g0003350.01"/>
    <property type="gene ID" value="OsLiXu_07g0003350"/>
</dbReference>
<dbReference type="EnsemblPlants" id="OsMH63_07G003250_01">
    <property type="protein sequence ID" value="OsMH63_07G003250_01"/>
    <property type="gene ID" value="OsMH63_07G003250"/>
</dbReference>
<dbReference type="EnsemblPlants" id="OsPr106_07g0003270.01">
    <property type="protein sequence ID" value="OsPr106_07g0003270.01"/>
    <property type="gene ID" value="OsPr106_07g0003270"/>
</dbReference>
<dbReference type="Gramene" id="BGIOSGA024807-TA">
    <property type="protein sequence ID" value="BGIOSGA024807-PA"/>
    <property type="gene ID" value="BGIOSGA024807"/>
</dbReference>
<dbReference type="Gramene" id="OsGoSa_07g0003280.01">
    <property type="protein sequence ID" value="OsGoSa_07g0003280.01"/>
    <property type="gene ID" value="OsGoSa_07g0003280"/>
</dbReference>
<dbReference type="Gramene" id="OsLaMu_07g0003240.01">
    <property type="protein sequence ID" value="OsLaMu_07g0003240.01"/>
    <property type="gene ID" value="OsLaMu_07g0003240"/>
</dbReference>
<dbReference type="Gramene" id="OsLima_07g0003260.01">
    <property type="protein sequence ID" value="OsLima_07g0003260.01"/>
    <property type="gene ID" value="OsLima_07g0003260"/>
</dbReference>
<dbReference type="Gramene" id="OsLiXu_07g0003350.01">
    <property type="protein sequence ID" value="OsLiXu_07g0003350.01"/>
    <property type="gene ID" value="OsLiXu_07g0003350"/>
</dbReference>
<dbReference type="Gramene" id="OsMH63_07G003250_01">
    <property type="protein sequence ID" value="OsMH63_07G003250_01"/>
    <property type="gene ID" value="OsMH63_07G003250"/>
</dbReference>
<dbReference type="Gramene" id="OsPr106_07g0003270.01">
    <property type="protein sequence ID" value="OsPr106_07g0003270.01"/>
    <property type="gene ID" value="OsPr106_07g0003270"/>
</dbReference>
<dbReference type="HOGENOM" id="CLU_100394_0_0_1"/>
<dbReference type="OMA" id="MEGGRDC"/>
<dbReference type="OrthoDB" id="782771at2759"/>
<dbReference type="CD-CODE" id="205A679C">
    <property type="entry name" value="OsJAZ2 condensate"/>
</dbReference>
<dbReference type="Proteomes" id="UP000007015">
    <property type="component" value="Chromosome 7"/>
</dbReference>
<dbReference type="GO" id="GO:0005634">
    <property type="term" value="C:nucleus"/>
    <property type="evidence" value="ECO:0007669"/>
    <property type="project" value="UniProtKB-SubCell"/>
</dbReference>
<dbReference type="GO" id="GO:0031347">
    <property type="term" value="P:regulation of defense response"/>
    <property type="evidence" value="ECO:0007669"/>
    <property type="project" value="TreeGrafter"/>
</dbReference>
<dbReference type="GO" id="GO:2000022">
    <property type="term" value="P:regulation of jasmonic acid mediated signaling pathway"/>
    <property type="evidence" value="ECO:0007669"/>
    <property type="project" value="TreeGrafter"/>
</dbReference>
<dbReference type="GO" id="GO:0009611">
    <property type="term" value="P:response to wounding"/>
    <property type="evidence" value="ECO:0007669"/>
    <property type="project" value="TreeGrafter"/>
</dbReference>
<dbReference type="InterPro" id="IPR018467">
    <property type="entry name" value="CCT_CS"/>
</dbReference>
<dbReference type="InterPro" id="IPR040390">
    <property type="entry name" value="TIFY/JAZ"/>
</dbReference>
<dbReference type="InterPro" id="IPR010399">
    <property type="entry name" value="Tify_dom"/>
</dbReference>
<dbReference type="PANTHER" id="PTHR33077">
    <property type="entry name" value="PROTEIN TIFY 4A-RELATED-RELATED"/>
    <property type="match status" value="1"/>
</dbReference>
<dbReference type="PANTHER" id="PTHR33077:SF17">
    <property type="entry name" value="PROTEIN TIFY 5B"/>
    <property type="match status" value="1"/>
</dbReference>
<dbReference type="Pfam" id="PF09425">
    <property type="entry name" value="Jas_motif"/>
    <property type="match status" value="1"/>
</dbReference>
<dbReference type="Pfam" id="PF06200">
    <property type="entry name" value="tify"/>
    <property type="match status" value="1"/>
</dbReference>
<dbReference type="PROSITE" id="PS51320">
    <property type="entry name" value="TIFY"/>
    <property type="match status" value="1"/>
</dbReference>
<keyword id="KW-1184">Jasmonic acid signaling pathway</keyword>
<keyword id="KW-0539">Nucleus</keyword>
<keyword id="KW-1185">Reference proteome</keyword>
<keyword id="KW-0804">Transcription</keyword>
<keyword id="KW-0805">Transcription regulation</keyword>
<keyword id="KW-0832">Ubl conjugation</keyword>
<comment type="function">
    <text evidence="1">Repressor of jasmonate responses.</text>
</comment>
<comment type="subcellular location">
    <subcellularLocation>
        <location evidence="4">Nucleus</location>
    </subcellularLocation>
</comment>
<comment type="domain">
    <text evidence="1">The jas domain (155-182) is required for interaction with COI1.</text>
</comment>
<comment type="PTM">
    <text evidence="1">Ubiquitinated. Targeted for degradation by the SCF(COI1) E3 ubiquitin ligase-proteasome pathway during jasmonate signaling.</text>
</comment>
<comment type="similarity">
    <text evidence="6">Belongs to the TIFY/JAZ family.</text>
</comment>
<protein>
    <recommendedName>
        <fullName evidence="6">Protein TIFY 5</fullName>
    </recommendedName>
</protein>
<proteinExistence type="inferred from homology"/>